<gene>
    <name evidence="1" type="primary">dxr</name>
    <name type="ordered locus">Bcep1808_1919</name>
</gene>
<evidence type="ECO:0000255" key="1">
    <source>
        <dbReference type="HAMAP-Rule" id="MF_00183"/>
    </source>
</evidence>
<organism>
    <name type="scientific">Burkholderia vietnamiensis (strain G4 / LMG 22486)</name>
    <name type="common">Burkholderia cepacia (strain R1808)</name>
    <dbReference type="NCBI Taxonomy" id="269482"/>
    <lineage>
        <taxon>Bacteria</taxon>
        <taxon>Pseudomonadati</taxon>
        <taxon>Pseudomonadota</taxon>
        <taxon>Betaproteobacteria</taxon>
        <taxon>Burkholderiales</taxon>
        <taxon>Burkholderiaceae</taxon>
        <taxon>Burkholderia</taxon>
        <taxon>Burkholderia cepacia complex</taxon>
    </lineage>
</organism>
<sequence length="398" mass="42001">MQKRLTLLGSTGSIGDSTLDVVARHPERFSVYALTAHRNGDKLVEQCLRFAPEVAVVGDAATAAHVEAKLRAAGSKTTVLYGPQALVDVSASDGCDTVVAAIVGAAGLAPSLAAARAGKRILLANKESLVMSGGIFMDAVRDHGAILLPVDSEHNAIFQCMPRDENEHGGISKIILTASGGPFRTREPATLADVTPDEACKHPNWVMGRKISVDSATMMNKGLEVIEAHWIFGLPGERIDVLIHPQSVIHSLVSYRDGSVLAQLGNPDMRTPIAHALAFPERVDAGVDQLDLAQIAQLSFEKPDYARFPCLALALKALEEGGIASAALNAANEVAVEAFLERRIGFMAIAATVDAVLNALPNRSPNGLDDVLAADADARRLAAGFIAKAPAPRVERIV</sequence>
<name>DXR_BURVG</name>
<comment type="function">
    <text evidence="1">Catalyzes the NADPH-dependent rearrangement and reduction of 1-deoxy-D-xylulose-5-phosphate (DXP) to 2-C-methyl-D-erythritol 4-phosphate (MEP).</text>
</comment>
<comment type="catalytic activity">
    <reaction evidence="1">
        <text>2-C-methyl-D-erythritol 4-phosphate + NADP(+) = 1-deoxy-D-xylulose 5-phosphate + NADPH + H(+)</text>
        <dbReference type="Rhea" id="RHEA:13717"/>
        <dbReference type="ChEBI" id="CHEBI:15378"/>
        <dbReference type="ChEBI" id="CHEBI:57783"/>
        <dbReference type="ChEBI" id="CHEBI:57792"/>
        <dbReference type="ChEBI" id="CHEBI:58262"/>
        <dbReference type="ChEBI" id="CHEBI:58349"/>
        <dbReference type="EC" id="1.1.1.267"/>
    </reaction>
    <physiologicalReaction direction="right-to-left" evidence="1">
        <dbReference type="Rhea" id="RHEA:13719"/>
    </physiologicalReaction>
</comment>
<comment type="cofactor">
    <cofactor evidence="1">
        <name>Mg(2+)</name>
        <dbReference type="ChEBI" id="CHEBI:18420"/>
    </cofactor>
    <cofactor evidence="1">
        <name>Mn(2+)</name>
        <dbReference type="ChEBI" id="CHEBI:29035"/>
    </cofactor>
</comment>
<comment type="pathway">
    <text evidence="1">Isoprenoid biosynthesis; isopentenyl diphosphate biosynthesis via DXP pathway; isopentenyl diphosphate from 1-deoxy-D-xylulose 5-phosphate: step 1/6.</text>
</comment>
<comment type="similarity">
    <text evidence="1">Belongs to the DXR family.</text>
</comment>
<protein>
    <recommendedName>
        <fullName evidence="1">1-deoxy-D-xylulose 5-phosphate reductoisomerase</fullName>
        <shortName evidence="1">DXP reductoisomerase</shortName>
        <ecNumber evidence="1">1.1.1.267</ecNumber>
    </recommendedName>
    <alternativeName>
        <fullName evidence="1">1-deoxyxylulose-5-phosphate reductoisomerase</fullName>
    </alternativeName>
    <alternativeName>
        <fullName evidence="1">2-C-methyl-D-erythritol 4-phosphate synthase</fullName>
    </alternativeName>
</protein>
<keyword id="KW-0414">Isoprene biosynthesis</keyword>
<keyword id="KW-0464">Manganese</keyword>
<keyword id="KW-0479">Metal-binding</keyword>
<keyword id="KW-0521">NADP</keyword>
<keyword id="KW-0560">Oxidoreductase</keyword>
<reference key="1">
    <citation type="submission" date="2007-03" db="EMBL/GenBank/DDBJ databases">
        <title>Complete sequence of chromosome 1 of Burkholderia vietnamiensis G4.</title>
        <authorList>
            <consortium name="US DOE Joint Genome Institute"/>
            <person name="Copeland A."/>
            <person name="Lucas S."/>
            <person name="Lapidus A."/>
            <person name="Barry K."/>
            <person name="Detter J.C."/>
            <person name="Glavina del Rio T."/>
            <person name="Hammon N."/>
            <person name="Israni S."/>
            <person name="Dalin E."/>
            <person name="Tice H."/>
            <person name="Pitluck S."/>
            <person name="Chain P."/>
            <person name="Malfatti S."/>
            <person name="Shin M."/>
            <person name="Vergez L."/>
            <person name="Schmutz J."/>
            <person name="Larimer F."/>
            <person name="Land M."/>
            <person name="Hauser L."/>
            <person name="Kyrpides N."/>
            <person name="Tiedje J."/>
            <person name="Richardson P."/>
        </authorList>
    </citation>
    <scope>NUCLEOTIDE SEQUENCE [LARGE SCALE GENOMIC DNA]</scope>
    <source>
        <strain>G4 / LMG 22486</strain>
    </source>
</reference>
<dbReference type="EC" id="1.1.1.267" evidence="1"/>
<dbReference type="EMBL" id="CP000614">
    <property type="protein sequence ID" value="ABO54922.1"/>
    <property type="molecule type" value="Genomic_DNA"/>
</dbReference>
<dbReference type="SMR" id="A4JF69"/>
<dbReference type="KEGG" id="bvi:Bcep1808_1919"/>
<dbReference type="eggNOG" id="COG0743">
    <property type="taxonomic scope" value="Bacteria"/>
</dbReference>
<dbReference type="HOGENOM" id="CLU_035714_4_0_4"/>
<dbReference type="UniPathway" id="UPA00056">
    <property type="reaction ID" value="UER00092"/>
</dbReference>
<dbReference type="Proteomes" id="UP000002287">
    <property type="component" value="Chromosome 1"/>
</dbReference>
<dbReference type="GO" id="GO:0030604">
    <property type="term" value="F:1-deoxy-D-xylulose-5-phosphate reductoisomerase activity"/>
    <property type="evidence" value="ECO:0007669"/>
    <property type="project" value="UniProtKB-UniRule"/>
</dbReference>
<dbReference type="GO" id="GO:0030145">
    <property type="term" value="F:manganese ion binding"/>
    <property type="evidence" value="ECO:0007669"/>
    <property type="project" value="TreeGrafter"/>
</dbReference>
<dbReference type="GO" id="GO:0070402">
    <property type="term" value="F:NADPH binding"/>
    <property type="evidence" value="ECO:0007669"/>
    <property type="project" value="InterPro"/>
</dbReference>
<dbReference type="GO" id="GO:0051484">
    <property type="term" value="P:isopentenyl diphosphate biosynthetic process, methylerythritol 4-phosphate pathway involved in terpenoid biosynthetic process"/>
    <property type="evidence" value="ECO:0007669"/>
    <property type="project" value="TreeGrafter"/>
</dbReference>
<dbReference type="FunFam" id="3.40.50.720:FF:000045">
    <property type="entry name" value="1-deoxy-D-xylulose 5-phosphate reductoisomerase"/>
    <property type="match status" value="1"/>
</dbReference>
<dbReference type="Gene3D" id="1.10.1740.10">
    <property type="match status" value="1"/>
</dbReference>
<dbReference type="Gene3D" id="3.40.50.720">
    <property type="entry name" value="NAD(P)-binding Rossmann-like Domain"/>
    <property type="match status" value="1"/>
</dbReference>
<dbReference type="HAMAP" id="MF_00183">
    <property type="entry name" value="DXP_reductoisom"/>
    <property type="match status" value="1"/>
</dbReference>
<dbReference type="InterPro" id="IPR003821">
    <property type="entry name" value="DXP_reductoisomerase"/>
</dbReference>
<dbReference type="InterPro" id="IPR013644">
    <property type="entry name" value="DXP_reductoisomerase_C"/>
</dbReference>
<dbReference type="InterPro" id="IPR013512">
    <property type="entry name" value="DXP_reductoisomerase_N"/>
</dbReference>
<dbReference type="InterPro" id="IPR026877">
    <property type="entry name" value="DXPR_C"/>
</dbReference>
<dbReference type="InterPro" id="IPR036169">
    <property type="entry name" value="DXPR_C_sf"/>
</dbReference>
<dbReference type="InterPro" id="IPR036291">
    <property type="entry name" value="NAD(P)-bd_dom_sf"/>
</dbReference>
<dbReference type="NCBIfam" id="TIGR00243">
    <property type="entry name" value="Dxr"/>
    <property type="match status" value="1"/>
</dbReference>
<dbReference type="NCBIfam" id="NF003938">
    <property type="entry name" value="PRK05447.1-1"/>
    <property type="match status" value="1"/>
</dbReference>
<dbReference type="NCBIfam" id="NF009114">
    <property type="entry name" value="PRK12464.1"/>
    <property type="match status" value="1"/>
</dbReference>
<dbReference type="PANTHER" id="PTHR30525">
    <property type="entry name" value="1-DEOXY-D-XYLULOSE 5-PHOSPHATE REDUCTOISOMERASE"/>
    <property type="match status" value="1"/>
</dbReference>
<dbReference type="PANTHER" id="PTHR30525:SF0">
    <property type="entry name" value="1-DEOXY-D-XYLULOSE 5-PHOSPHATE REDUCTOISOMERASE, CHLOROPLASTIC"/>
    <property type="match status" value="1"/>
</dbReference>
<dbReference type="Pfam" id="PF08436">
    <property type="entry name" value="DXP_redisom_C"/>
    <property type="match status" value="1"/>
</dbReference>
<dbReference type="Pfam" id="PF02670">
    <property type="entry name" value="DXP_reductoisom"/>
    <property type="match status" value="1"/>
</dbReference>
<dbReference type="Pfam" id="PF13288">
    <property type="entry name" value="DXPR_C"/>
    <property type="match status" value="1"/>
</dbReference>
<dbReference type="PIRSF" id="PIRSF006205">
    <property type="entry name" value="Dxp_reductismrs"/>
    <property type="match status" value="1"/>
</dbReference>
<dbReference type="SUPFAM" id="SSF69055">
    <property type="entry name" value="1-deoxy-D-xylulose-5-phosphate reductoisomerase, C-terminal domain"/>
    <property type="match status" value="1"/>
</dbReference>
<dbReference type="SUPFAM" id="SSF55347">
    <property type="entry name" value="Glyceraldehyde-3-phosphate dehydrogenase-like, C-terminal domain"/>
    <property type="match status" value="1"/>
</dbReference>
<dbReference type="SUPFAM" id="SSF51735">
    <property type="entry name" value="NAD(P)-binding Rossmann-fold domains"/>
    <property type="match status" value="1"/>
</dbReference>
<proteinExistence type="inferred from homology"/>
<accession>A4JF69</accession>
<feature type="chain" id="PRO_1000020234" description="1-deoxy-D-xylulose 5-phosphate reductoisomerase">
    <location>
        <begin position="1"/>
        <end position="398"/>
    </location>
</feature>
<feature type="binding site" evidence="1">
    <location>
        <position position="11"/>
    </location>
    <ligand>
        <name>NADPH</name>
        <dbReference type="ChEBI" id="CHEBI:57783"/>
    </ligand>
</feature>
<feature type="binding site" evidence="1">
    <location>
        <position position="12"/>
    </location>
    <ligand>
        <name>NADPH</name>
        <dbReference type="ChEBI" id="CHEBI:57783"/>
    </ligand>
</feature>
<feature type="binding site" evidence="1">
    <location>
        <position position="13"/>
    </location>
    <ligand>
        <name>NADPH</name>
        <dbReference type="ChEBI" id="CHEBI:57783"/>
    </ligand>
</feature>
<feature type="binding site" evidence="1">
    <location>
        <position position="14"/>
    </location>
    <ligand>
        <name>NADPH</name>
        <dbReference type="ChEBI" id="CHEBI:57783"/>
    </ligand>
</feature>
<feature type="binding site" evidence="1">
    <location>
        <position position="38"/>
    </location>
    <ligand>
        <name>NADPH</name>
        <dbReference type="ChEBI" id="CHEBI:57783"/>
    </ligand>
</feature>
<feature type="binding site" evidence="1">
    <location>
        <position position="39"/>
    </location>
    <ligand>
        <name>NADPH</name>
        <dbReference type="ChEBI" id="CHEBI:57783"/>
    </ligand>
</feature>
<feature type="binding site" evidence="1">
    <location>
        <position position="125"/>
    </location>
    <ligand>
        <name>NADPH</name>
        <dbReference type="ChEBI" id="CHEBI:57783"/>
    </ligand>
</feature>
<feature type="binding site" evidence="1">
    <location>
        <position position="126"/>
    </location>
    <ligand>
        <name>1-deoxy-D-xylulose 5-phosphate</name>
        <dbReference type="ChEBI" id="CHEBI:57792"/>
    </ligand>
</feature>
<feature type="binding site" evidence="1">
    <location>
        <position position="127"/>
    </location>
    <ligand>
        <name>NADPH</name>
        <dbReference type="ChEBI" id="CHEBI:57783"/>
    </ligand>
</feature>
<feature type="binding site" evidence="1">
    <location>
        <position position="151"/>
    </location>
    <ligand>
        <name>Mn(2+)</name>
        <dbReference type="ChEBI" id="CHEBI:29035"/>
    </ligand>
</feature>
<feature type="binding site" evidence="1">
    <location>
        <position position="152"/>
    </location>
    <ligand>
        <name>1-deoxy-D-xylulose 5-phosphate</name>
        <dbReference type="ChEBI" id="CHEBI:57792"/>
    </ligand>
</feature>
<feature type="binding site" evidence="1">
    <location>
        <position position="153"/>
    </location>
    <ligand>
        <name>1-deoxy-D-xylulose 5-phosphate</name>
        <dbReference type="ChEBI" id="CHEBI:57792"/>
    </ligand>
</feature>
<feature type="binding site" evidence="1">
    <location>
        <position position="153"/>
    </location>
    <ligand>
        <name>Mn(2+)</name>
        <dbReference type="ChEBI" id="CHEBI:29035"/>
    </ligand>
</feature>
<feature type="binding site" evidence="1">
    <location>
        <position position="179"/>
    </location>
    <ligand>
        <name>1-deoxy-D-xylulose 5-phosphate</name>
        <dbReference type="ChEBI" id="CHEBI:57792"/>
    </ligand>
</feature>
<feature type="binding site" evidence="1">
    <location>
        <position position="202"/>
    </location>
    <ligand>
        <name>1-deoxy-D-xylulose 5-phosphate</name>
        <dbReference type="ChEBI" id="CHEBI:57792"/>
    </ligand>
</feature>
<feature type="binding site" evidence="1">
    <location>
        <position position="208"/>
    </location>
    <ligand>
        <name>NADPH</name>
        <dbReference type="ChEBI" id="CHEBI:57783"/>
    </ligand>
</feature>
<feature type="binding site" evidence="1">
    <location>
        <position position="215"/>
    </location>
    <ligand>
        <name>1-deoxy-D-xylulose 5-phosphate</name>
        <dbReference type="ChEBI" id="CHEBI:57792"/>
    </ligand>
</feature>
<feature type="binding site" evidence="1">
    <location>
        <position position="220"/>
    </location>
    <ligand>
        <name>1-deoxy-D-xylulose 5-phosphate</name>
        <dbReference type="ChEBI" id="CHEBI:57792"/>
    </ligand>
</feature>
<feature type="binding site" evidence="1">
    <location>
        <position position="221"/>
    </location>
    <ligand>
        <name>1-deoxy-D-xylulose 5-phosphate</name>
        <dbReference type="ChEBI" id="CHEBI:57792"/>
    </ligand>
</feature>
<feature type="binding site" evidence="1">
    <location>
        <position position="224"/>
    </location>
    <ligand>
        <name>1-deoxy-D-xylulose 5-phosphate</name>
        <dbReference type="ChEBI" id="CHEBI:57792"/>
    </ligand>
</feature>
<feature type="binding site" evidence="1">
    <location>
        <position position="224"/>
    </location>
    <ligand>
        <name>Mn(2+)</name>
        <dbReference type="ChEBI" id="CHEBI:29035"/>
    </ligand>
</feature>